<name>DEFB1_CHLAE</name>
<gene>
    <name type="primary">DEFB1</name>
</gene>
<dbReference type="EMBL" id="AY033758">
    <property type="protein sequence ID" value="AAK61471.1"/>
    <property type="molecule type" value="Genomic_DNA"/>
</dbReference>
<dbReference type="EMBL" id="AY033744">
    <property type="protein sequence ID" value="AAK61471.1"/>
    <property type="status" value="JOINED"/>
    <property type="molecule type" value="Genomic_DNA"/>
</dbReference>
<dbReference type="SMR" id="Q95J24"/>
<dbReference type="GO" id="GO:0005615">
    <property type="term" value="C:extracellular space"/>
    <property type="evidence" value="ECO:0007669"/>
    <property type="project" value="TreeGrafter"/>
</dbReference>
<dbReference type="GO" id="GO:0016020">
    <property type="term" value="C:membrane"/>
    <property type="evidence" value="ECO:0000250"/>
    <property type="project" value="UniProtKB"/>
</dbReference>
<dbReference type="GO" id="GO:1990742">
    <property type="term" value="C:microvesicle"/>
    <property type="evidence" value="ECO:0000250"/>
    <property type="project" value="UniProtKB"/>
</dbReference>
<dbReference type="GO" id="GO:0097225">
    <property type="term" value="C:sperm midpiece"/>
    <property type="evidence" value="ECO:0000250"/>
    <property type="project" value="UniProtKB"/>
</dbReference>
<dbReference type="GO" id="GO:0031731">
    <property type="term" value="F:CCR6 chemokine receptor binding"/>
    <property type="evidence" value="ECO:0000250"/>
    <property type="project" value="UniProtKB"/>
</dbReference>
<dbReference type="GO" id="GO:0042802">
    <property type="term" value="F:identical protein binding"/>
    <property type="evidence" value="ECO:0000250"/>
    <property type="project" value="UniProtKB"/>
</dbReference>
<dbReference type="GO" id="GO:0019722">
    <property type="term" value="P:calcium-mediated signaling"/>
    <property type="evidence" value="ECO:0000250"/>
    <property type="project" value="UniProtKB"/>
</dbReference>
<dbReference type="GO" id="GO:0050829">
    <property type="term" value="P:defense response to Gram-negative bacterium"/>
    <property type="evidence" value="ECO:0000250"/>
    <property type="project" value="UniProtKB"/>
</dbReference>
<dbReference type="GO" id="GO:0050830">
    <property type="term" value="P:defense response to Gram-positive bacterium"/>
    <property type="evidence" value="ECO:0000250"/>
    <property type="project" value="UniProtKB"/>
</dbReference>
<dbReference type="GO" id="GO:0045087">
    <property type="term" value="P:innate immune response"/>
    <property type="evidence" value="ECO:0000250"/>
    <property type="project" value="UniProtKB"/>
</dbReference>
<dbReference type="GO" id="GO:0002227">
    <property type="term" value="P:innate immune response in mucosa"/>
    <property type="evidence" value="ECO:0007669"/>
    <property type="project" value="TreeGrafter"/>
</dbReference>
<dbReference type="GO" id="GO:0060474">
    <property type="term" value="P:positive regulation of flagellated sperm motility involved in capacitation"/>
    <property type="evidence" value="ECO:0000250"/>
    <property type="project" value="UniProtKB"/>
</dbReference>
<dbReference type="GO" id="GO:0009617">
    <property type="term" value="P:response to bacterium"/>
    <property type="evidence" value="ECO:0000250"/>
    <property type="project" value="UniProtKB"/>
</dbReference>
<dbReference type="FunFam" id="3.10.360.10:FF:000001">
    <property type="entry name" value="Beta-defensin 1"/>
    <property type="match status" value="1"/>
</dbReference>
<dbReference type="Gene3D" id="3.10.360.10">
    <property type="entry name" value="Antimicrobial Peptide, Beta-defensin 2, Chain A"/>
    <property type="match status" value="1"/>
</dbReference>
<dbReference type="InterPro" id="IPR001855">
    <property type="entry name" value="Defensin_beta-like"/>
</dbReference>
<dbReference type="PANTHER" id="PTHR21388:SF9">
    <property type="entry name" value="BETA-DEFENSIN 1"/>
    <property type="match status" value="1"/>
</dbReference>
<dbReference type="PANTHER" id="PTHR21388">
    <property type="entry name" value="BETA-DEFENSIN-RELATED"/>
    <property type="match status" value="1"/>
</dbReference>
<dbReference type="Pfam" id="PF00711">
    <property type="entry name" value="Defensin_beta"/>
    <property type="match status" value="1"/>
</dbReference>
<dbReference type="SUPFAM" id="SSF57392">
    <property type="entry name" value="Defensin-like"/>
    <property type="match status" value="1"/>
</dbReference>
<accession>Q95J24</accession>
<organism>
    <name type="scientific">Chlorocebus aethiops</name>
    <name type="common">Green monkey</name>
    <name type="synonym">Cercopithecus aethiops</name>
    <dbReference type="NCBI Taxonomy" id="9534"/>
    <lineage>
        <taxon>Eukaryota</taxon>
        <taxon>Metazoa</taxon>
        <taxon>Chordata</taxon>
        <taxon>Craniata</taxon>
        <taxon>Vertebrata</taxon>
        <taxon>Euteleostomi</taxon>
        <taxon>Mammalia</taxon>
        <taxon>Eutheria</taxon>
        <taxon>Euarchontoglires</taxon>
        <taxon>Primates</taxon>
        <taxon>Haplorrhini</taxon>
        <taxon>Catarrhini</taxon>
        <taxon>Cercopithecidae</taxon>
        <taxon>Cercopithecinae</taxon>
        <taxon>Chlorocebus</taxon>
    </lineage>
</organism>
<reference key="1">
    <citation type="journal article" date="2002" name="Immunogenetics">
        <title>Beta-defensin 1 gene variability among non-human primates.</title>
        <authorList>
            <person name="Del Pero M."/>
            <person name="Boniotto M."/>
            <person name="Zuccon D."/>
            <person name="Cervella P."/>
            <person name="Spano A."/>
            <person name="Amoroso A."/>
            <person name="Crovella S."/>
        </authorList>
    </citation>
    <scope>NUCLEOTIDE SEQUENCE [GENOMIC DNA]</scope>
</reference>
<keyword id="KW-0044">Antibiotic</keyword>
<keyword id="KW-0929">Antimicrobial</keyword>
<keyword id="KW-0211">Defensin</keyword>
<keyword id="KW-1015">Disulfide bond</keyword>
<keyword id="KW-0472">Membrane</keyword>
<keyword id="KW-0964">Secreted</keyword>
<keyword id="KW-0732">Signal</keyword>
<protein>
    <recommendedName>
        <fullName>Beta-defensin 1</fullName>
        <shortName>BD-1</shortName>
    </recommendedName>
    <alternativeName>
        <fullName>Defensin, beta 1</fullName>
    </alternativeName>
</protein>
<evidence type="ECO:0000250" key="1"/>
<evidence type="ECO:0000250" key="2">
    <source>
        <dbReference type="UniProtKB" id="P60022"/>
    </source>
</evidence>
<evidence type="ECO:0000255" key="3"/>
<evidence type="ECO:0000305" key="4"/>
<proteinExistence type="inferred from homology"/>
<feature type="signal peptide" evidence="3">
    <location>
        <begin position="1"/>
        <end position="21"/>
    </location>
</feature>
<feature type="propeptide" id="PRO_0000006890" evidence="1">
    <location>
        <begin position="22"/>
        <end position="32"/>
    </location>
</feature>
<feature type="peptide" id="PRO_0000006891" description="Beta-defensin 1">
    <location>
        <begin position="33"/>
        <end position="68"/>
    </location>
</feature>
<feature type="disulfide bond" evidence="1">
    <location>
        <begin position="37"/>
        <end position="66"/>
    </location>
</feature>
<feature type="disulfide bond" evidence="1">
    <location>
        <begin position="44"/>
        <end position="59"/>
    </location>
</feature>
<feature type="disulfide bond" evidence="1">
    <location>
        <begin position="49"/>
        <end position="67"/>
    </location>
</feature>
<comment type="function">
    <text evidence="2">Has bactericidal activity. May act as a ligand for C-C chemokine receptor CCR6. Positively regulates the sperm motility and bactericidal activity in a CCR6-dependent manner. Binds to CCR6 and triggers Ca2+ mobilization in the sperm which is important for its motility.</text>
</comment>
<comment type="subunit">
    <text evidence="2">Monomer. Homodimer.</text>
</comment>
<comment type="subcellular location">
    <subcellularLocation>
        <location evidence="2">Secreted</location>
    </subcellularLocation>
    <subcellularLocation>
        <location evidence="2">Membrane</location>
    </subcellularLocation>
    <text evidence="2">Associates with tumor cell membrane-derived microvesicles.</text>
</comment>
<comment type="similarity">
    <text evidence="4">Belongs to the beta-defensin family.</text>
</comment>
<sequence>MRTSYLLLFTLCLLLSEMASGDNFLTGLGHRSDHYNCVRSGGQCLYSACPIYTKIQGTCYHGKAKCCK</sequence>